<gene>
    <name evidence="1" type="primary">accD</name>
    <name type="ordered locus">LMHCC_0995</name>
</gene>
<comment type="function">
    <text evidence="1">Component of the acetyl coenzyme A carboxylase (ACC) complex. Biotin carboxylase (BC) catalyzes the carboxylation of biotin on its carrier protein (BCCP) and then the CO(2) group is transferred by the transcarboxylase to acetyl-CoA to form malonyl-CoA.</text>
</comment>
<comment type="catalytic activity">
    <reaction evidence="1">
        <text>N(6)-carboxybiotinyl-L-lysyl-[protein] + acetyl-CoA = N(6)-biotinyl-L-lysyl-[protein] + malonyl-CoA</text>
        <dbReference type="Rhea" id="RHEA:54728"/>
        <dbReference type="Rhea" id="RHEA-COMP:10505"/>
        <dbReference type="Rhea" id="RHEA-COMP:10506"/>
        <dbReference type="ChEBI" id="CHEBI:57288"/>
        <dbReference type="ChEBI" id="CHEBI:57384"/>
        <dbReference type="ChEBI" id="CHEBI:83144"/>
        <dbReference type="ChEBI" id="CHEBI:83145"/>
        <dbReference type="EC" id="2.1.3.15"/>
    </reaction>
</comment>
<comment type="cofactor">
    <cofactor evidence="1">
        <name>Zn(2+)</name>
        <dbReference type="ChEBI" id="CHEBI:29105"/>
    </cofactor>
    <text evidence="1">Binds 1 zinc ion per subunit.</text>
</comment>
<comment type="pathway">
    <text evidence="1">Lipid metabolism; malonyl-CoA biosynthesis; malonyl-CoA from acetyl-CoA: step 1/1.</text>
</comment>
<comment type="subunit">
    <text evidence="1">Acetyl-CoA carboxylase is a heterohexamer composed of biotin carboxyl carrier protein (AccB), biotin carboxylase (AccC) and two subunits each of ACCase subunit alpha (AccA) and ACCase subunit beta (AccD).</text>
</comment>
<comment type="subcellular location">
    <subcellularLocation>
        <location evidence="1">Cytoplasm</location>
    </subcellularLocation>
</comment>
<comment type="similarity">
    <text evidence="1">Belongs to the AccD/PCCB family.</text>
</comment>
<reference key="1">
    <citation type="journal article" date="2011" name="J. Bacteriol.">
        <title>Genome sequence of lineage III Listeria monocytogenes strain HCC23.</title>
        <authorList>
            <person name="Steele C.L."/>
            <person name="Donaldson J.R."/>
            <person name="Paul D."/>
            <person name="Banes M.M."/>
            <person name="Arick T."/>
            <person name="Bridges S.M."/>
            <person name="Lawrence M.L."/>
        </authorList>
    </citation>
    <scope>NUCLEOTIDE SEQUENCE [LARGE SCALE GENOMIC DNA]</scope>
    <source>
        <strain>HCC23</strain>
    </source>
</reference>
<protein>
    <recommendedName>
        <fullName evidence="1">Acetyl-coenzyme A carboxylase carboxyl transferase subunit beta</fullName>
        <shortName evidence="1">ACCase subunit beta</shortName>
        <shortName evidence="1">Acetyl-CoA carboxylase carboxyltransferase subunit beta</shortName>
        <ecNumber evidence="1">2.1.3.15</ecNumber>
    </recommendedName>
</protein>
<dbReference type="EC" id="2.1.3.15" evidence="1"/>
<dbReference type="EMBL" id="CP001175">
    <property type="protein sequence ID" value="ACK39343.1"/>
    <property type="molecule type" value="Genomic_DNA"/>
</dbReference>
<dbReference type="RefSeq" id="WP_012581257.1">
    <property type="nucleotide sequence ID" value="NC_011660.1"/>
</dbReference>
<dbReference type="SMR" id="B8DHH4"/>
<dbReference type="KEGG" id="lmh:LMHCC_0995"/>
<dbReference type="HOGENOM" id="CLU_015486_1_1_9"/>
<dbReference type="UniPathway" id="UPA00655">
    <property type="reaction ID" value="UER00711"/>
</dbReference>
<dbReference type="GO" id="GO:0009317">
    <property type="term" value="C:acetyl-CoA carboxylase complex"/>
    <property type="evidence" value="ECO:0007669"/>
    <property type="project" value="InterPro"/>
</dbReference>
<dbReference type="GO" id="GO:0003989">
    <property type="term" value="F:acetyl-CoA carboxylase activity"/>
    <property type="evidence" value="ECO:0007669"/>
    <property type="project" value="InterPro"/>
</dbReference>
<dbReference type="GO" id="GO:0005524">
    <property type="term" value="F:ATP binding"/>
    <property type="evidence" value="ECO:0007669"/>
    <property type="project" value="UniProtKB-KW"/>
</dbReference>
<dbReference type="GO" id="GO:0016743">
    <property type="term" value="F:carboxyl- or carbamoyltransferase activity"/>
    <property type="evidence" value="ECO:0007669"/>
    <property type="project" value="UniProtKB-UniRule"/>
</dbReference>
<dbReference type="GO" id="GO:0008270">
    <property type="term" value="F:zinc ion binding"/>
    <property type="evidence" value="ECO:0007669"/>
    <property type="project" value="UniProtKB-UniRule"/>
</dbReference>
<dbReference type="GO" id="GO:0006633">
    <property type="term" value="P:fatty acid biosynthetic process"/>
    <property type="evidence" value="ECO:0007669"/>
    <property type="project" value="UniProtKB-KW"/>
</dbReference>
<dbReference type="GO" id="GO:2001295">
    <property type="term" value="P:malonyl-CoA biosynthetic process"/>
    <property type="evidence" value="ECO:0007669"/>
    <property type="project" value="UniProtKB-UniRule"/>
</dbReference>
<dbReference type="Gene3D" id="3.90.226.10">
    <property type="entry name" value="2-enoyl-CoA Hydratase, Chain A, domain 1"/>
    <property type="match status" value="1"/>
</dbReference>
<dbReference type="HAMAP" id="MF_01395">
    <property type="entry name" value="AcetylCoA_CT_beta"/>
    <property type="match status" value="1"/>
</dbReference>
<dbReference type="InterPro" id="IPR034733">
    <property type="entry name" value="AcCoA_carboxyl_beta"/>
</dbReference>
<dbReference type="InterPro" id="IPR000438">
    <property type="entry name" value="Acetyl_CoA_COase_Trfase_b_su"/>
</dbReference>
<dbReference type="InterPro" id="IPR029045">
    <property type="entry name" value="ClpP/crotonase-like_dom_sf"/>
</dbReference>
<dbReference type="InterPro" id="IPR011762">
    <property type="entry name" value="COA_CT_N"/>
</dbReference>
<dbReference type="InterPro" id="IPR041010">
    <property type="entry name" value="Znf-ACC"/>
</dbReference>
<dbReference type="NCBIfam" id="TIGR00515">
    <property type="entry name" value="accD"/>
    <property type="match status" value="1"/>
</dbReference>
<dbReference type="PANTHER" id="PTHR42995">
    <property type="entry name" value="ACETYL-COENZYME A CARBOXYLASE CARBOXYL TRANSFERASE SUBUNIT BETA, CHLOROPLASTIC"/>
    <property type="match status" value="1"/>
</dbReference>
<dbReference type="PANTHER" id="PTHR42995:SF5">
    <property type="entry name" value="ACETYL-COENZYME A CARBOXYLASE CARBOXYL TRANSFERASE SUBUNIT BETA, CHLOROPLASTIC"/>
    <property type="match status" value="1"/>
</dbReference>
<dbReference type="Pfam" id="PF01039">
    <property type="entry name" value="Carboxyl_trans"/>
    <property type="match status" value="1"/>
</dbReference>
<dbReference type="Pfam" id="PF17848">
    <property type="entry name" value="Zn_ribbon_ACC"/>
    <property type="match status" value="1"/>
</dbReference>
<dbReference type="PRINTS" id="PR01070">
    <property type="entry name" value="ACCCTRFRASEB"/>
</dbReference>
<dbReference type="SUPFAM" id="SSF52096">
    <property type="entry name" value="ClpP/crotonase"/>
    <property type="match status" value="1"/>
</dbReference>
<dbReference type="PROSITE" id="PS50980">
    <property type="entry name" value="COA_CT_NTER"/>
    <property type="match status" value="1"/>
</dbReference>
<name>ACCD_LISMH</name>
<sequence length="294" mass="32119">MLGDLFTKPKKRKYATIPSDGTKADVPEGIMTKCPECKKIMYTKELQKNLMVCNYCGFHHPIGAKARIDMLVDEGSFEEIDANLTTANPLGFEDYMDRIEKDKQKSGLNEAILTGHATIGGNPLVIAVMDSRFRMASMGSVVGEKILRAVEDADKTNKPFVIFTASGGARMQEGMLSLMQMAKTSAAFKRFSNHGGLVITVMTHPTTGGVSASFASLGDYNFAEPGALIGFAGRRVIEQTVREELPEDFQTAEFLLKHGQLDDCISRLDLQNKLSFILSIHVKTPEVGGEADGE</sequence>
<feature type="chain" id="PRO_0000389783" description="Acetyl-coenzyme A carboxylase carboxyl transferase subunit beta">
    <location>
        <begin position="1"/>
        <end position="294"/>
    </location>
</feature>
<feature type="domain" description="CoA carboxyltransferase N-terminal" evidence="2">
    <location>
        <begin position="30"/>
        <end position="294"/>
    </location>
</feature>
<feature type="zinc finger region" description="C4-type" evidence="1">
    <location>
        <begin position="34"/>
        <end position="56"/>
    </location>
</feature>
<feature type="binding site" evidence="1">
    <location>
        <position position="34"/>
    </location>
    <ligand>
        <name>Zn(2+)</name>
        <dbReference type="ChEBI" id="CHEBI:29105"/>
    </ligand>
</feature>
<feature type="binding site" evidence="1">
    <location>
        <position position="37"/>
    </location>
    <ligand>
        <name>Zn(2+)</name>
        <dbReference type="ChEBI" id="CHEBI:29105"/>
    </ligand>
</feature>
<feature type="binding site" evidence="1">
    <location>
        <position position="53"/>
    </location>
    <ligand>
        <name>Zn(2+)</name>
        <dbReference type="ChEBI" id="CHEBI:29105"/>
    </ligand>
</feature>
<feature type="binding site" evidence="1">
    <location>
        <position position="56"/>
    </location>
    <ligand>
        <name>Zn(2+)</name>
        <dbReference type="ChEBI" id="CHEBI:29105"/>
    </ligand>
</feature>
<organism>
    <name type="scientific">Listeria monocytogenes serotype 4a (strain HCC23)</name>
    <dbReference type="NCBI Taxonomy" id="552536"/>
    <lineage>
        <taxon>Bacteria</taxon>
        <taxon>Bacillati</taxon>
        <taxon>Bacillota</taxon>
        <taxon>Bacilli</taxon>
        <taxon>Bacillales</taxon>
        <taxon>Listeriaceae</taxon>
        <taxon>Listeria</taxon>
    </lineage>
</organism>
<accession>B8DHH4</accession>
<evidence type="ECO:0000255" key="1">
    <source>
        <dbReference type="HAMAP-Rule" id="MF_01395"/>
    </source>
</evidence>
<evidence type="ECO:0000255" key="2">
    <source>
        <dbReference type="PROSITE-ProRule" id="PRU01136"/>
    </source>
</evidence>
<proteinExistence type="inferred from homology"/>
<keyword id="KW-0067">ATP-binding</keyword>
<keyword id="KW-0963">Cytoplasm</keyword>
<keyword id="KW-0275">Fatty acid biosynthesis</keyword>
<keyword id="KW-0276">Fatty acid metabolism</keyword>
<keyword id="KW-0444">Lipid biosynthesis</keyword>
<keyword id="KW-0443">Lipid metabolism</keyword>
<keyword id="KW-0479">Metal-binding</keyword>
<keyword id="KW-0547">Nucleotide-binding</keyword>
<keyword id="KW-0808">Transferase</keyword>
<keyword id="KW-0862">Zinc</keyword>
<keyword id="KW-0863">Zinc-finger</keyword>